<proteinExistence type="inferred from homology"/>
<evidence type="ECO:0000255" key="1">
    <source>
        <dbReference type="HAMAP-Rule" id="MF_00577"/>
    </source>
</evidence>
<accession>Q07W36</accession>
<organism>
    <name type="scientific">Shewanella frigidimarina (strain NCIMB 400)</name>
    <dbReference type="NCBI Taxonomy" id="318167"/>
    <lineage>
        <taxon>Bacteria</taxon>
        <taxon>Pseudomonadati</taxon>
        <taxon>Pseudomonadota</taxon>
        <taxon>Gammaproteobacteria</taxon>
        <taxon>Alteromonadales</taxon>
        <taxon>Shewanellaceae</taxon>
        <taxon>Shewanella</taxon>
    </lineage>
</organism>
<feature type="chain" id="PRO_1000025150" description="Urocanate hydratase">
    <location>
        <begin position="1"/>
        <end position="556"/>
    </location>
</feature>
<feature type="active site" evidence="1">
    <location>
        <position position="410"/>
    </location>
</feature>
<feature type="binding site" evidence="1">
    <location>
        <begin position="52"/>
        <end position="53"/>
    </location>
    <ligand>
        <name>NAD(+)</name>
        <dbReference type="ChEBI" id="CHEBI:57540"/>
    </ligand>
</feature>
<feature type="binding site" evidence="1">
    <location>
        <position position="130"/>
    </location>
    <ligand>
        <name>NAD(+)</name>
        <dbReference type="ChEBI" id="CHEBI:57540"/>
    </ligand>
</feature>
<feature type="binding site" evidence="1">
    <location>
        <begin position="176"/>
        <end position="178"/>
    </location>
    <ligand>
        <name>NAD(+)</name>
        <dbReference type="ChEBI" id="CHEBI:57540"/>
    </ligand>
</feature>
<feature type="binding site" evidence="1">
    <location>
        <position position="196"/>
    </location>
    <ligand>
        <name>NAD(+)</name>
        <dbReference type="ChEBI" id="CHEBI:57540"/>
    </ligand>
</feature>
<feature type="binding site" evidence="1">
    <location>
        <position position="201"/>
    </location>
    <ligand>
        <name>NAD(+)</name>
        <dbReference type="ChEBI" id="CHEBI:57540"/>
    </ligand>
</feature>
<feature type="binding site" evidence="1">
    <location>
        <begin position="242"/>
        <end position="243"/>
    </location>
    <ligand>
        <name>NAD(+)</name>
        <dbReference type="ChEBI" id="CHEBI:57540"/>
    </ligand>
</feature>
<feature type="binding site" evidence="1">
    <location>
        <begin position="263"/>
        <end position="267"/>
    </location>
    <ligand>
        <name>NAD(+)</name>
        <dbReference type="ChEBI" id="CHEBI:57540"/>
    </ligand>
</feature>
<feature type="binding site" evidence="1">
    <location>
        <begin position="273"/>
        <end position="274"/>
    </location>
    <ligand>
        <name>NAD(+)</name>
        <dbReference type="ChEBI" id="CHEBI:57540"/>
    </ligand>
</feature>
<feature type="binding site" evidence="1">
    <location>
        <position position="322"/>
    </location>
    <ligand>
        <name>NAD(+)</name>
        <dbReference type="ChEBI" id="CHEBI:57540"/>
    </ligand>
</feature>
<feature type="binding site" evidence="1">
    <location>
        <position position="492"/>
    </location>
    <ligand>
        <name>NAD(+)</name>
        <dbReference type="ChEBI" id="CHEBI:57540"/>
    </ligand>
</feature>
<protein>
    <recommendedName>
        <fullName evidence="1">Urocanate hydratase</fullName>
        <shortName evidence="1">Urocanase</shortName>
        <ecNumber evidence="1">4.2.1.49</ecNumber>
    </recommendedName>
    <alternativeName>
        <fullName evidence="1">Imidazolonepropionate hydrolase</fullName>
    </alternativeName>
</protein>
<comment type="function">
    <text evidence="1">Catalyzes the conversion of urocanate to 4-imidazolone-5-propionate.</text>
</comment>
<comment type="catalytic activity">
    <reaction evidence="1">
        <text>4-imidazolone-5-propanoate = trans-urocanate + H2O</text>
        <dbReference type="Rhea" id="RHEA:13101"/>
        <dbReference type="ChEBI" id="CHEBI:15377"/>
        <dbReference type="ChEBI" id="CHEBI:17771"/>
        <dbReference type="ChEBI" id="CHEBI:77893"/>
        <dbReference type="EC" id="4.2.1.49"/>
    </reaction>
</comment>
<comment type="cofactor">
    <cofactor evidence="1">
        <name>NAD(+)</name>
        <dbReference type="ChEBI" id="CHEBI:57540"/>
    </cofactor>
    <text evidence="1">Binds 1 NAD(+) per subunit.</text>
</comment>
<comment type="pathway">
    <text evidence="1">Amino-acid degradation; L-histidine degradation into L-glutamate; N-formimidoyl-L-glutamate from L-histidine: step 2/3.</text>
</comment>
<comment type="subcellular location">
    <subcellularLocation>
        <location evidence="1">Cytoplasm</location>
    </subcellularLocation>
</comment>
<comment type="similarity">
    <text evidence="1">Belongs to the urocanase family.</text>
</comment>
<dbReference type="EC" id="4.2.1.49" evidence="1"/>
<dbReference type="EMBL" id="CP000447">
    <property type="protein sequence ID" value="ABI73778.1"/>
    <property type="molecule type" value="Genomic_DNA"/>
</dbReference>
<dbReference type="RefSeq" id="WP_011639362.1">
    <property type="nucleotide sequence ID" value="NC_008345.1"/>
</dbReference>
<dbReference type="SMR" id="Q07W36"/>
<dbReference type="STRING" id="318167.Sfri_3953"/>
<dbReference type="KEGG" id="sfr:Sfri_3953"/>
<dbReference type="eggNOG" id="COG2987">
    <property type="taxonomic scope" value="Bacteria"/>
</dbReference>
<dbReference type="HOGENOM" id="CLU_018868_0_1_6"/>
<dbReference type="OrthoDB" id="9764874at2"/>
<dbReference type="UniPathway" id="UPA00379">
    <property type="reaction ID" value="UER00550"/>
</dbReference>
<dbReference type="Proteomes" id="UP000000684">
    <property type="component" value="Chromosome"/>
</dbReference>
<dbReference type="GO" id="GO:0005737">
    <property type="term" value="C:cytoplasm"/>
    <property type="evidence" value="ECO:0007669"/>
    <property type="project" value="UniProtKB-SubCell"/>
</dbReference>
<dbReference type="GO" id="GO:0016153">
    <property type="term" value="F:urocanate hydratase activity"/>
    <property type="evidence" value="ECO:0007669"/>
    <property type="project" value="UniProtKB-UniRule"/>
</dbReference>
<dbReference type="GO" id="GO:0019556">
    <property type="term" value="P:L-histidine catabolic process to glutamate and formamide"/>
    <property type="evidence" value="ECO:0007669"/>
    <property type="project" value="UniProtKB-UniPathway"/>
</dbReference>
<dbReference type="GO" id="GO:0019557">
    <property type="term" value="P:L-histidine catabolic process to glutamate and formate"/>
    <property type="evidence" value="ECO:0007669"/>
    <property type="project" value="UniProtKB-UniPathway"/>
</dbReference>
<dbReference type="FunFam" id="3.40.50.10730:FF:000001">
    <property type="entry name" value="Urocanate hydratase"/>
    <property type="match status" value="1"/>
</dbReference>
<dbReference type="Gene3D" id="3.40.50.10730">
    <property type="entry name" value="Urocanase like domains"/>
    <property type="match status" value="1"/>
</dbReference>
<dbReference type="Gene3D" id="3.40.1770.10">
    <property type="entry name" value="Urocanase superfamily"/>
    <property type="match status" value="1"/>
</dbReference>
<dbReference type="HAMAP" id="MF_00577">
    <property type="entry name" value="HutU"/>
    <property type="match status" value="1"/>
</dbReference>
<dbReference type="InterPro" id="IPR055351">
    <property type="entry name" value="Urocanase"/>
</dbReference>
<dbReference type="InterPro" id="IPR023637">
    <property type="entry name" value="Urocanase-like"/>
</dbReference>
<dbReference type="InterPro" id="IPR035401">
    <property type="entry name" value="Urocanase_C"/>
</dbReference>
<dbReference type="InterPro" id="IPR038364">
    <property type="entry name" value="Urocanase_central_sf"/>
</dbReference>
<dbReference type="InterPro" id="IPR023636">
    <property type="entry name" value="Urocanase_CS"/>
</dbReference>
<dbReference type="InterPro" id="IPR035400">
    <property type="entry name" value="Urocanase_N"/>
</dbReference>
<dbReference type="InterPro" id="IPR035085">
    <property type="entry name" value="Urocanase_Rossmann-like"/>
</dbReference>
<dbReference type="InterPro" id="IPR036190">
    <property type="entry name" value="Urocanase_sf"/>
</dbReference>
<dbReference type="NCBIfam" id="TIGR01228">
    <property type="entry name" value="hutU"/>
    <property type="match status" value="1"/>
</dbReference>
<dbReference type="NCBIfam" id="NF003820">
    <property type="entry name" value="PRK05414.1"/>
    <property type="match status" value="1"/>
</dbReference>
<dbReference type="PANTHER" id="PTHR12216">
    <property type="entry name" value="UROCANATE HYDRATASE"/>
    <property type="match status" value="1"/>
</dbReference>
<dbReference type="PANTHER" id="PTHR12216:SF4">
    <property type="entry name" value="UROCANATE HYDRATASE"/>
    <property type="match status" value="1"/>
</dbReference>
<dbReference type="Pfam" id="PF01175">
    <property type="entry name" value="Urocanase"/>
    <property type="match status" value="1"/>
</dbReference>
<dbReference type="Pfam" id="PF17392">
    <property type="entry name" value="Urocanase_C"/>
    <property type="match status" value="1"/>
</dbReference>
<dbReference type="Pfam" id="PF17391">
    <property type="entry name" value="Urocanase_N"/>
    <property type="match status" value="1"/>
</dbReference>
<dbReference type="PIRSF" id="PIRSF001423">
    <property type="entry name" value="Urocanate_hydrat"/>
    <property type="match status" value="1"/>
</dbReference>
<dbReference type="SUPFAM" id="SSF111326">
    <property type="entry name" value="Urocanase"/>
    <property type="match status" value="1"/>
</dbReference>
<dbReference type="PROSITE" id="PS01233">
    <property type="entry name" value="UROCANASE"/>
    <property type="match status" value="1"/>
</dbReference>
<sequence length="556" mass="60270">MDKRHDPSRRIIAPHGTQLQCKSWLTEAAMRMLMNNLHPDVAERPEDLVVYGGIGRAARDWQSYDKIIEVLKRLEDDQTLLVQSGKPVGVFTTHSNAPRVIIANSNLVPHWANWEHFNELDKKGLAMYGQMTAGSWIYIGSQGIVQGTYETFVAMAKQHFNGSSAGKWILTGGLGGMGGAQPLAGTMAGYSVLTCEVDETRIDFRMRTGYVDKKATSLDQALAMIYAANQSGKPVSVGLLANAADVFTELVTRGIVPDVVTDQTSAHDPLNGYLPQGWSLEYAAKMRKTDEAAVVKAAKQSMAVQVRAMLALQAAGAATTDYGNNIRQMAFEEGVTNAFDFPGFVPAYVRPLFCEGIGPFRWVALSGDPEDIYKTDAKVKELIPDNPQLHNWLDMARERIAFQGLPARICWVGLKDRARLALAFNEMVKNGELSAPIVIGRDHLDSGSVASPNRETEAMLDGSDAVSDWPLMNALLNTASGATWVSLHHGGGVGMGFSQHSGVVIVADGTDEAAVRLGRVLWNDPATGVMRHADAGYDIAKNCAKEQGLDLPMLGA</sequence>
<reference key="1">
    <citation type="submission" date="2006-08" db="EMBL/GenBank/DDBJ databases">
        <title>Complete sequence of Shewanella frigidimarina NCIMB 400.</title>
        <authorList>
            <consortium name="US DOE Joint Genome Institute"/>
            <person name="Copeland A."/>
            <person name="Lucas S."/>
            <person name="Lapidus A."/>
            <person name="Barry K."/>
            <person name="Detter J.C."/>
            <person name="Glavina del Rio T."/>
            <person name="Hammon N."/>
            <person name="Israni S."/>
            <person name="Dalin E."/>
            <person name="Tice H."/>
            <person name="Pitluck S."/>
            <person name="Fredrickson J.K."/>
            <person name="Kolker E."/>
            <person name="McCuel L.A."/>
            <person name="DiChristina T."/>
            <person name="Nealson K.H."/>
            <person name="Newman D."/>
            <person name="Tiedje J.M."/>
            <person name="Zhou J."/>
            <person name="Romine M.F."/>
            <person name="Culley D.E."/>
            <person name="Serres M."/>
            <person name="Chertkov O."/>
            <person name="Brettin T."/>
            <person name="Bruce D."/>
            <person name="Han C."/>
            <person name="Tapia R."/>
            <person name="Gilna P."/>
            <person name="Schmutz J."/>
            <person name="Larimer F."/>
            <person name="Land M."/>
            <person name="Hauser L."/>
            <person name="Kyrpides N."/>
            <person name="Mikhailova N."/>
            <person name="Richardson P."/>
        </authorList>
    </citation>
    <scope>NUCLEOTIDE SEQUENCE [LARGE SCALE GENOMIC DNA]</scope>
    <source>
        <strain>NCIMB 400</strain>
    </source>
</reference>
<name>HUTU_SHEFN</name>
<gene>
    <name evidence="1" type="primary">hutU</name>
    <name type="ordered locus">Sfri_3953</name>
</gene>
<keyword id="KW-0963">Cytoplasm</keyword>
<keyword id="KW-0369">Histidine metabolism</keyword>
<keyword id="KW-0456">Lyase</keyword>
<keyword id="KW-0520">NAD</keyword>
<keyword id="KW-1185">Reference proteome</keyword>